<feature type="signal peptide" evidence="2">
    <location>
        <begin position="1"/>
        <end position="33"/>
    </location>
</feature>
<feature type="chain" id="PRO_0000015385" description="Interleukin-22b">
    <location>
        <begin position="34"/>
        <end position="179"/>
    </location>
</feature>
<feature type="glycosylation site" description="N-linked (GlcNAc...) asparagine" evidence="2">
    <location>
        <position position="54"/>
    </location>
</feature>
<feature type="glycosylation site" description="N-linked (GlcNAc...) asparagine" evidence="2">
    <location>
        <position position="68"/>
    </location>
</feature>
<feature type="glycosylation site" description="N-linked (GlcNAc...) asparagine" evidence="2">
    <location>
        <position position="97"/>
    </location>
</feature>
<feature type="disulfide bond" evidence="1">
    <location>
        <begin position="40"/>
        <end position="132"/>
    </location>
</feature>
<feature type="disulfide bond" evidence="1">
    <location>
        <begin position="89"/>
        <end position="178"/>
    </location>
</feature>
<feature type="sequence conflict" description="In Ref. 1; CAB75547 and 2; CAC19436." evidence="4" ref="1 2">
    <original>V</original>
    <variation>A</variation>
    <location>
        <position position="63"/>
    </location>
</feature>
<feature type="sequence conflict" description="In Ref. 1; CAB75547 and 2; CAC19436." evidence="4" ref="1 2">
    <original>W</original>
    <variation>R</variation>
    <location>
        <position position="73"/>
    </location>
</feature>
<feature type="sequence conflict" description="In Ref. 1; CAB75547 and 2; CAC19436." evidence="4" ref="1 2">
    <original>V</original>
    <variation>I</variation>
    <location>
        <position position="103"/>
    </location>
</feature>
<feature type="sequence conflict" description="In Ref. 1; CAB75547 and 2; CAC19436." evidence="4" ref="1 2">
    <original>Q</original>
    <variation>R</variation>
    <location>
        <position position="112"/>
    </location>
</feature>
<evidence type="ECO:0000250" key="1"/>
<evidence type="ECO:0000255" key="2"/>
<evidence type="ECO:0000303" key="3">
    <source>
    </source>
</evidence>
<evidence type="ECO:0000305" key="4"/>
<evidence type="ECO:0000312" key="5">
    <source>
        <dbReference type="MGI" id="MGI:2151139"/>
    </source>
</evidence>
<name>IL22B_MOUSE</name>
<sequence length="179" mass="20179">MAVLQKSMSFSLMGTLAASCLLLIALWAQEANALPINTRCKLEVSNFQQPYIVNRTFMLAKEVSLADNNTDVWLIGEKLFRGVSAKDQCYLMKQVLNFTLEDVLLPQSDRFQPYMQEVVPFLTKLSNQLSSCHISGDDQNIQKNVRRLKETVKKLGESGEIKAIGELDLLFMSLRNACV</sequence>
<accession>Q9JJY8</accession>
<accession>E9QAL9</accession>
<protein>
    <recommendedName>
        <fullName>Interleukin-22b</fullName>
        <shortName>IL-22b</shortName>
    </recommendedName>
    <alternativeName>
        <fullName>IL-10-related T-cell-derived-inducible factor beta</fullName>
        <shortName>IL-TIF beta</shortName>
        <shortName>IL-TIFb</shortName>
    </alternativeName>
</protein>
<dbReference type="EMBL" id="AJ249492">
    <property type="protein sequence ID" value="CAB75547.1"/>
    <property type="molecule type" value="mRNA"/>
</dbReference>
<dbReference type="EMBL" id="AJ294728">
    <property type="protein sequence ID" value="CAC19436.1"/>
    <property type="molecule type" value="Genomic_DNA"/>
</dbReference>
<dbReference type="EMBL" id="AC158600">
    <property type="status" value="NOT_ANNOTATED_CDS"/>
    <property type="molecule type" value="Genomic_DNA"/>
</dbReference>
<dbReference type="CCDS" id="CCDS48700.1"/>
<dbReference type="RefSeq" id="NP_473420.2">
    <property type="nucleotide sequence ID" value="NM_054079.2"/>
</dbReference>
<dbReference type="SMR" id="Q9JJY8"/>
<dbReference type="FunCoup" id="Q9JJY8">
    <property type="interactions" value="735"/>
</dbReference>
<dbReference type="STRING" id="10090.ENSMUSP00000128415"/>
<dbReference type="GlyCosmos" id="Q9JJY8">
    <property type="glycosylation" value="3 sites, No reported glycans"/>
</dbReference>
<dbReference type="GlyGen" id="Q9JJY8">
    <property type="glycosylation" value="3 sites"/>
</dbReference>
<dbReference type="PaxDb" id="10090-ENSMUSP00000128415"/>
<dbReference type="DNASU" id="116849"/>
<dbReference type="Ensembl" id="ENSMUST00000163808.2">
    <property type="protein sequence ID" value="ENSMUSP00000128415.2"/>
    <property type="gene ID" value="ENSMUSG00000090461.3"/>
</dbReference>
<dbReference type="GeneID" id="116849"/>
<dbReference type="KEGG" id="mmu:116849"/>
<dbReference type="UCSC" id="uc007hdx.1">
    <property type="organism name" value="mouse"/>
</dbReference>
<dbReference type="AGR" id="MGI:2151139"/>
<dbReference type="CTD" id="116849"/>
<dbReference type="MGI" id="MGI:2151139">
    <property type="gene designation" value="Il22b"/>
</dbReference>
<dbReference type="VEuPathDB" id="HostDB:ENSMUSG00000090461"/>
<dbReference type="eggNOG" id="ENOG502S5PC">
    <property type="taxonomic scope" value="Eukaryota"/>
</dbReference>
<dbReference type="GeneTree" id="ENSGT00510000048550"/>
<dbReference type="HOGENOM" id="CLU_127397_0_0_1"/>
<dbReference type="InParanoid" id="Q9JJY8"/>
<dbReference type="OMA" id="INTRCKL"/>
<dbReference type="OrthoDB" id="66320at9989"/>
<dbReference type="PhylomeDB" id="Q9JJY8"/>
<dbReference type="TreeFam" id="TF333253"/>
<dbReference type="BioGRID-ORCS" id="116849">
    <property type="hits" value="3 hits in 74 CRISPR screens"/>
</dbReference>
<dbReference type="PRO" id="PR:Q9JJY8"/>
<dbReference type="Proteomes" id="UP000000589">
    <property type="component" value="Chromosome 10"/>
</dbReference>
<dbReference type="RNAct" id="Q9JJY8">
    <property type="molecule type" value="protein"/>
</dbReference>
<dbReference type="Bgee" id="ENSMUSG00000090461">
    <property type="expression patterns" value="Expressed in blastoderm cell in morula and 12 other cell types or tissues"/>
</dbReference>
<dbReference type="GO" id="GO:0005615">
    <property type="term" value="C:extracellular space"/>
    <property type="evidence" value="ECO:0007669"/>
    <property type="project" value="UniProtKB-KW"/>
</dbReference>
<dbReference type="GO" id="GO:0005125">
    <property type="term" value="F:cytokine activity"/>
    <property type="evidence" value="ECO:0007669"/>
    <property type="project" value="UniProtKB-KW"/>
</dbReference>
<dbReference type="FunFam" id="1.20.1250.10:FF:000032">
    <property type="entry name" value="Interleukin-22"/>
    <property type="match status" value="1"/>
</dbReference>
<dbReference type="Gene3D" id="1.20.1250.10">
    <property type="match status" value="1"/>
</dbReference>
<dbReference type="InterPro" id="IPR009079">
    <property type="entry name" value="4_helix_cytokine-like_core"/>
</dbReference>
<dbReference type="InterPro" id="IPR020423">
    <property type="entry name" value="IL-10_CS"/>
</dbReference>
<dbReference type="InterPro" id="IPR020453">
    <property type="entry name" value="IL-22"/>
</dbReference>
<dbReference type="PANTHER" id="PTHR48488">
    <property type="entry name" value="INTERLEUKIN-22"/>
    <property type="match status" value="1"/>
</dbReference>
<dbReference type="PANTHER" id="PTHR48488:SF1">
    <property type="entry name" value="INTERLEUKIN-22"/>
    <property type="match status" value="1"/>
</dbReference>
<dbReference type="Pfam" id="PF14565">
    <property type="entry name" value="IL22"/>
    <property type="match status" value="1"/>
</dbReference>
<dbReference type="PIRSF" id="PIRSF037726">
    <property type="entry name" value="Interleukin-22"/>
    <property type="match status" value="1"/>
</dbReference>
<dbReference type="PRINTS" id="PR01936">
    <property type="entry name" value="INTRLEUKIN22"/>
</dbReference>
<dbReference type="SUPFAM" id="SSF47266">
    <property type="entry name" value="4-helical cytokines"/>
    <property type="match status" value="1"/>
</dbReference>
<dbReference type="PROSITE" id="PS00520">
    <property type="entry name" value="INTERLEUKIN_10"/>
    <property type="match status" value="1"/>
</dbReference>
<proteinExistence type="evidence at transcript level"/>
<reference key="1">
    <citation type="journal article" date="2000" name="J. Immunol.">
        <title>Cloning and characterization of IL-10-related T cell-derived inducible factor (IL-TIF), a novel cytokine structurally related to IL-10 and inducible by IL-9.</title>
        <authorList>
            <person name="Dumoutier L."/>
            <person name="Louahed J."/>
            <person name="Renauld J.-C."/>
        </authorList>
    </citation>
    <scope>NUCLEOTIDE SEQUENCE [MRNA]</scope>
    <source>
        <strain>129</strain>
    </source>
</reference>
<reference key="2">
    <citation type="journal article" date="2000" name="Genes Immun.">
        <title>IL-TIF/IL-22: genomic organization and mapping of the human and mouse genes.</title>
        <authorList>
            <person name="Dumoutier L."/>
            <person name="Van Roost E."/>
            <person name="Colau D."/>
            <person name="Ameye G."/>
            <person name="Michaux L."/>
            <person name="Renauld J.-C."/>
        </authorList>
    </citation>
    <scope>NUCLEOTIDE SEQUENCE [GENOMIC DNA]</scope>
    <source>
        <strain>129</strain>
    </source>
</reference>
<reference key="3">
    <citation type="journal article" date="2009" name="PLoS Biol.">
        <title>Lineage-specific biology revealed by a finished genome assembly of the mouse.</title>
        <authorList>
            <person name="Church D.M."/>
            <person name="Goodstadt L."/>
            <person name="Hillier L.W."/>
            <person name="Zody M.C."/>
            <person name="Goldstein S."/>
            <person name="She X."/>
            <person name="Bult C.J."/>
            <person name="Agarwala R."/>
            <person name="Cherry J.L."/>
            <person name="DiCuccio M."/>
            <person name="Hlavina W."/>
            <person name="Kapustin Y."/>
            <person name="Meric P."/>
            <person name="Maglott D."/>
            <person name="Birtle Z."/>
            <person name="Marques A.C."/>
            <person name="Graves T."/>
            <person name="Zhou S."/>
            <person name="Teague B."/>
            <person name="Potamousis K."/>
            <person name="Churas C."/>
            <person name="Place M."/>
            <person name="Herschleb J."/>
            <person name="Runnheim R."/>
            <person name="Forrest D."/>
            <person name="Amos-Landgraf J."/>
            <person name="Schwartz D.C."/>
            <person name="Cheng Z."/>
            <person name="Lindblad-Toh K."/>
            <person name="Eichler E.E."/>
            <person name="Ponting C.P."/>
        </authorList>
    </citation>
    <scope>NUCLEOTIDE SEQUENCE [LARGE SCALE GENOMIC DNA]</scope>
    <source>
        <strain>C57BL/6J</strain>
    </source>
</reference>
<gene>
    <name evidence="5" type="primary">Il22b</name>
    <name evidence="3" type="synonym">Iltifb</name>
</gene>
<keyword id="KW-0202">Cytokine</keyword>
<keyword id="KW-1015">Disulfide bond</keyword>
<keyword id="KW-0325">Glycoprotein</keyword>
<keyword id="KW-1185">Reference proteome</keyword>
<keyword id="KW-0964">Secreted</keyword>
<keyword id="KW-0732">Signal</keyword>
<organism>
    <name type="scientific">Mus musculus</name>
    <name type="common">Mouse</name>
    <dbReference type="NCBI Taxonomy" id="10090"/>
    <lineage>
        <taxon>Eukaryota</taxon>
        <taxon>Metazoa</taxon>
        <taxon>Chordata</taxon>
        <taxon>Craniata</taxon>
        <taxon>Vertebrata</taxon>
        <taxon>Euteleostomi</taxon>
        <taxon>Mammalia</taxon>
        <taxon>Eutheria</taxon>
        <taxon>Euarchontoglires</taxon>
        <taxon>Glires</taxon>
        <taxon>Rodentia</taxon>
        <taxon>Myomorpha</taxon>
        <taxon>Muroidea</taxon>
        <taxon>Muridae</taxon>
        <taxon>Murinae</taxon>
        <taxon>Mus</taxon>
        <taxon>Mus</taxon>
    </lineage>
</organism>
<comment type="function">
    <text>Cytokine that contributes to the inflammatory response in vivo.</text>
</comment>
<comment type="subcellular location">
    <subcellularLocation>
        <location>Secreted</location>
    </subcellularLocation>
</comment>
<comment type="similarity">
    <text evidence="4">Belongs to the IL-10 family.</text>
</comment>